<sequence>MARVTVEDCLEHVDNRFELVMLSTKRARQLATGGKEPRVAWENDKPTVVALREIAEGIVTNEFIAAEEIVTEDPVFAAFEDENNEAV</sequence>
<dbReference type="EC" id="2.7.7.6" evidence="1"/>
<dbReference type="EMBL" id="AE015451">
    <property type="protein sequence ID" value="AAN70866.1"/>
    <property type="molecule type" value="Genomic_DNA"/>
</dbReference>
<dbReference type="RefSeq" id="NP_747402.1">
    <property type="nucleotide sequence ID" value="NC_002947.4"/>
</dbReference>
<dbReference type="RefSeq" id="WP_003253383.1">
    <property type="nucleotide sequence ID" value="NZ_CP169744.1"/>
</dbReference>
<dbReference type="SMR" id="Q88C82"/>
<dbReference type="STRING" id="160488.PP_5301"/>
<dbReference type="PaxDb" id="160488-PP_5301"/>
<dbReference type="GeneID" id="97170669"/>
<dbReference type="KEGG" id="ppu:PP_5301"/>
<dbReference type="PATRIC" id="fig|160488.4.peg.5653"/>
<dbReference type="eggNOG" id="COG1758">
    <property type="taxonomic scope" value="Bacteria"/>
</dbReference>
<dbReference type="HOGENOM" id="CLU_125406_5_2_6"/>
<dbReference type="OrthoDB" id="9796300at2"/>
<dbReference type="PhylomeDB" id="Q88C82"/>
<dbReference type="BioCyc" id="PPUT160488:G1G01-5658-MONOMER"/>
<dbReference type="Proteomes" id="UP000000556">
    <property type="component" value="Chromosome"/>
</dbReference>
<dbReference type="GO" id="GO:0000428">
    <property type="term" value="C:DNA-directed RNA polymerase complex"/>
    <property type="evidence" value="ECO:0007669"/>
    <property type="project" value="UniProtKB-KW"/>
</dbReference>
<dbReference type="GO" id="GO:0003677">
    <property type="term" value="F:DNA binding"/>
    <property type="evidence" value="ECO:0007669"/>
    <property type="project" value="UniProtKB-UniRule"/>
</dbReference>
<dbReference type="GO" id="GO:0003899">
    <property type="term" value="F:DNA-directed RNA polymerase activity"/>
    <property type="evidence" value="ECO:0007669"/>
    <property type="project" value="UniProtKB-UniRule"/>
</dbReference>
<dbReference type="GO" id="GO:0006351">
    <property type="term" value="P:DNA-templated transcription"/>
    <property type="evidence" value="ECO:0007669"/>
    <property type="project" value="UniProtKB-UniRule"/>
</dbReference>
<dbReference type="Gene3D" id="3.90.940.10">
    <property type="match status" value="1"/>
</dbReference>
<dbReference type="HAMAP" id="MF_00366">
    <property type="entry name" value="RNApol_bact_RpoZ"/>
    <property type="match status" value="1"/>
</dbReference>
<dbReference type="InterPro" id="IPR003716">
    <property type="entry name" value="DNA-dir_RNA_pol_omega"/>
</dbReference>
<dbReference type="InterPro" id="IPR006110">
    <property type="entry name" value="Pol_omega/Rpo6/RPB6"/>
</dbReference>
<dbReference type="InterPro" id="IPR036161">
    <property type="entry name" value="RPB6/omega-like_sf"/>
</dbReference>
<dbReference type="NCBIfam" id="TIGR00690">
    <property type="entry name" value="rpoZ"/>
    <property type="match status" value="1"/>
</dbReference>
<dbReference type="PANTHER" id="PTHR34476">
    <property type="entry name" value="DNA-DIRECTED RNA POLYMERASE SUBUNIT OMEGA"/>
    <property type="match status" value="1"/>
</dbReference>
<dbReference type="PANTHER" id="PTHR34476:SF1">
    <property type="entry name" value="DNA-DIRECTED RNA POLYMERASE SUBUNIT OMEGA"/>
    <property type="match status" value="1"/>
</dbReference>
<dbReference type="Pfam" id="PF01192">
    <property type="entry name" value="RNA_pol_Rpb6"/>
    <property type="match status" value="1"/>
</dbReference>
<dbReference type="SMART" id="SM01409">
    <property type="entry name" value="RNA_pol_Rpb6"/>
    <property type="match status" value="1"/>
</dbReference>
<dbReference type="SUPFAM" id="SSF63562">
    <property type="entry name" value="RPB6/omega subunit-like"/>
    <property type="match status" value="1"/>
</dbReference>
<protein>
    <recommendedName>
        <fullName evidence="1">DNA-directed RNA polymerase subunit omega</fullName>
        <shortName evidence="1">RNAP omega subunit</shortName>
        <ecNumber evidence="1">2.7.7.6</ecNumber>
    </recommendedName>
    <alternativeName>
        <fullName evidence="1">RNA polymerase omega subunit</fullName>
    </alternativeName>
    <alternativeName>
        <fullName evidence="1">Transcriptase subunit omega</fullName>
    </alternativeName>
</protein>
<comment type="function">
    <text evidence="1">Promotes RNA polymerase assembly. Latches the N- and C-terminal regions of the beta' subunit thereby facilitating its interaction with the beta and alpha subunits.</text>
</comment>
<comment type="catalytic activity">
    <reaction evidence="1">
        <text>RNA(n) + a ribonucleoside 5'-triphosphate = RNA(n+1) + diphosphate</text>
        <dbReference type="Rhea" id="RHEA:21248"/>
        <dbReference type="Rhea" id="RHEA-COMP:14527"/>
        <dbReference type="Rhea" id="RHEA-COMP:17342"/>
        <dbReference type="ChEBI" id="CHEBI:33019"/>
        <dbReference type="ChEBI" id="CHEBI:61557"/>
        <dbReference type="ChEBI" id="CHEBI:140395"/>
        <dbReference type="EC" id="2.7.7.6"/>
    </reaction>
</comment>
<comment type="subunit">
    <text evidence="1">The RNAP catalytic core consists of 2 alpha, 1 beta, 1 beta' and 1 omega subunit. When a sigma factor is associated with the core the holoenzyme is formed, which can initiate transcription.</text>
</comment>
<comment type="similarity">
    <text evidence="1">Belongs to the RNA polymerase subunit omega family.</text>
</comment>
<keyword id="KW-0240">DNA-directed RNA polymerase</keyword>
<keyword id="KW-0548">Nucleotidyltransferase</keyword>
<keyword id="KW-1185">Reference proteome</keyword>
<keyword id="KW-0804">Transcription</keyword>
<keyword id="KW-0808">Transferase</keyword>
<name>RPOZ_PSEPK</name>
<evidence type="ECO:0000255" key="1">
    <source>
        <dbReference type="HAMAP-Rule" id="MF_00366"/>
    </source>
</evidence>
<proteinExistence type="inferred from homology"/>
<feature type="chain" id="PRO_0000128964" description="DNA-directed RNA polymerase subunit omega">
    <location>
        <begin position="1"/>
        <end position="87"/>
    </location>
</feature>
<gene>
    <name evidence="1" type="primary">rpoZ</name>
    <name type="ordered locus">PP_5301</name>
</gene>
<accession>Q88C82</accession>
<organism>
    <name type="scientific">Pseudomonas putida (strain ATCC 47054 / DSM 6125 / CFBP 8728 / NCIMB 11950 / KT2440)</name>
    <dbReference type="NCBI Taxonomy" id="160488"/>
    <lineage>
        <taxon>Bacteria</taxon>
        <taxon>Pseudomonadati</taxon>
        <taxon>Pseudomonadota</taxon>
        <taxon>Gammaproteobacteria</taxon>
        <taxon>Pseudomonadales</taxon>
        <taxon>Pseudomonadaceae</taxon>
        <taxon>Pseudomonas</taxon>
    </lineage>
</organism>
<reference key="1">
    <citation type="journal article" date="2002" name="Environ. Microbiol.">
        <title>Complete genome sequence and comparative analysis of the metabolically versatile Pseudomonas putida KT2440.</title>
        <authorList>
            <person name="Nelson K.E."/>
            <person name="Weinel C."/>
            <person name="Paulsen I.T."/>
            <person name="Dodson R.J."/>
            <person name="Hilbert H."/>
            <person name="Martins dos Santos V.A.P."/>
            <person name="Fouts D.E."/>
            <person name="Gill S.R."/>
            <person name="Pop M."/>
            <person name="Holmes M."/>
            <person name="Brinkac L.M."/>
            <person name="Beanan M.J."/>
            <person name="DeBoy R.T."/>
            <person name="Daugherty S.C."/>
            <person name="Kolonay J.F."/>
            <person name="Madupu R."/>
            <person name="Nelson W.C."/>
            <person name="White O."/>
            <person name="Peterson J.D."/>
            <person name="Khouri H.M."/>
            <person name="Hance I."/>
            <person name="Chris Lee P."/>
            <person name="Holtzapple E.K."/>
            <person name="Scanlan D."/>
            <person name="Tran K."/>
            <person name="Moazzez A."/>
            <person name="Utterback T.R."/>
            <person name="Rizzo M."/>
            <person name="Lee K."/>
            <person name="Kosack D."/>
            <person name="Moestl D."/>
            <person name="Wedler H."/>
            <person name="Lauber J."/>
            <person name="Stjepandic D."/>
            <person name="Hoheisel J."/>
            <person name="Straetz M."/>
            <person name="Heim S."/>
            <person name="Kiewitz C."/>
            <person name="Eisen J.A."/>
            <person name="Timmis K.N."/>
            <person name="Duesterhoeft A."/>
            <person name="Tuemmler B."/>
            <person name="Fraser C.M."/>
        </authorList>
    </citation>
    <scope>NUCLEOTIDE SEQUENCE [LARGE SCALE GENOMIC DNA]</scope>
    <source>
        <strain>ATCC 47054 / DSM 6125 / CFBP 8728 / NCIMB 11950 / KT2440</strain>
    </source>
</reference>